<organism>
    <name type="scientific">Bacillus subtilis (strain 168)</name>
    <dbReference type="NCBI Taxonomy" id="224308"/>
    <lineage>
        <taxon>Bacteria</taxon>
        <taxon>Bacillati</taxon>
        <taxon>Bacillota</taxon>
        <taxon>Bacilli</taxon>
        <taxon>Bacillales</taxon>
        <taxon>Bacillaceae</taxon>
        <taxon>Bacillus</taxon>
    </lineage>
</organism>
<name>XKDV_BACSU</name>
<sequence length="687" mass="77078">MAYEEKTDWLPDDPINEDDVNRWEKGIKDAHTDLAAHKNDMNNPHNTTKAQIGLGNVDNVQQASKTEFNEHNHDSTRHITSVERDEWNAKETPAGAQYKADQAEANAKAYTDNFAARRDNPNQVTKAQVGLGNVENVKQASLADFDAHLSNSKVHVSEGERNKWNAAQLIKLTGDDGKRIQLQDGTDILTLSSGFYCAVGQSVVNNPVEGDAAWYNYDIVEGGSGRKTIVAYQSWGSMMWIGMVHTDGEFRGWKQIATTDFIDRVQTELDLHENDKTNPHSVTKQQVGLGNVENVKQETPDGAQKKADTALNQSKDYTNSTAFITRPLNSITDANDLNLPPGTYRLDTNYMNANPVLQNQFPLNDNRTGLLIIYPSANKWATRQDWFSISTKTLYTRVAVNGTDYSGWYILENSEGSQNKADKALADAKNYVETNYTNQKLTVLTGSNAIQDARISGNDYKYGITFMDIGANNTTGYPLTYGFVKNEKHSNYRFTQYFYGNADTTSGSYDHVGTWIRHWWADSGWTAWQKISGFAHANIGTTGRQALIKGENNKIKYNRIIKDSHKLFDTKNNRFVASHAGMHLVSASLYIENTERYSNFELYVYVNGTKYKLMNQFRMPTPSNNSDNEFNATVTGSVTVPLDAGDYVEIYVYVGYSGDVTRYVTDSNGALNYFDVLELGGRNYPRV</sequence>
<evidence type="ECO:0000305" key="1"/>
<keyword id="KW-1185">Reference proteome</keyword>
<reference key="1">
    <citation type="submission" date="1996-03" db="EMBL/GenBank/DDBJ databases">
        <authorList>
            <person name="Krogh S."/>
            <person name="O'Reilly M."/>
            <person name="Nolan N."/>
            <person name="Devine K.M."/>
        </authorList>
    </citation>
    <scope>NUCLEOTIDE SEQUENCE [GENOMIC DNA]</scope>
    <source>
        <strain>168</strain>
    </source>
</reference>
<reference key="2">
    <citation type="journal article" date="1997" name="Nature">
        <title>The complete genome sequence of the Gram-positive bacterium Bacillus subtilis.</title>
        <authorList>
            <person name="Kunst F."/>
            <person name="Ogasawara N."/>
            <person name="Moszer I."/>
            <person name="Albertini A.M."/>
            <person name="Alloni G."/>
            <person name="Azevedo V."/>
            <person name="Bertero M.G."/>
            <person name="Bessieres P."/>
            <person name="Bolotin A."/>
            <person name="Borchert S."/>
            <person name="Borriss R."/>
            <person name="Boursier L."/>
            <person name="Brans A."/>
            <person name="Braun M."/>
            <person name="Brignell S.C."/>
            <person name="Bron S."/>
            <person name="Brouillet S."/>
            <person name="Bruschi C.V."/>
            <person name="Caldwell B."/>
            <person name="Capuano V."/>
            <person name="Carter N.M."/>
            <person name="Choi S.-K."/>
            <person name="Codani J.-J."/>
            <person name="Connerton I.F."/>
            <person name="Cummings N.J."/>
            <person name="Daniel R.A."/>
            <person name="Denizot F."/>
            <person name="Devine K.M."/>
            <person name="Duesterhoeft A."/>
            <person name="Ehrlich S.D."/>
            <person name="Emmerson P.T."/>
            <person name="Entian K.-D."/>
            <person name="Errington J."/>
            <person name="Fabret C."/>
            <person name="Ferrari E."/>
            <person name="Foulger D."/>
            <person name="Fritz C."/>
            <person name="Fujita M."/>
            <person name="Fujita Y."/>
            <person name="Fuma S."/>
            <person name="Galizzi A."/>
            <person name="Galleron N."/>
            <person name="Ghim S.-Y."/>
            <person name="Glaser P."/>
            <person name="Goffeau A."/>
            <person name="Golightly E.J."/>
            <person name="Grandi G."/>
            <person name="Guiseppi G."/>
            <person name="Guy B.J."/>
            <person name="Haga K."/>
            <person name="Haiech J."/>
            <person name="Harwood C.R."/>
            <person name="Henaut A."/>
            <person name="Hilbert H."/>
            <person name="Holsappel S."/>
            <person name="Hosono S."/>
            <person name="Hullo M.-F."/>
            <person name="Itaya M."/>
            <person name="Jones L.-M."/>
            <person name="Joris B."/>
            <person name="Karamata D."/>
            <person name="Kasahara Y."/>
            <person name="Klaerr-Blanchard M."/>
            <person name="Klein C."/>
            <person name="Kobayashi Y."/>
            <person name="Koetter P."/>
            <person name="Koningstein G."/>
            <person name="Krogh S."/>
            <person name="Kumano M."/>
            <person name="Kurita K."/>
            <person name="Lapidus A."/>
            <person name="Lardinois S."/>
            <person name="Lauber J."/>
            <person name="Lazarevic V."/>
            <person name="Lee S.-M."/>
            <person name="Levine A."/>
            <person name="Liu H."/>
            <person name="Masuda S."/>
            <person name="Mauel C."/>
            <person name="Medigue C."/>
            <person name="Medina N."/>
            <person name="Mellado R.P."/>
            <person name="Mizuno M."/>
            <person name="Moestl D."/>
            <person name="Nakai S."/>
            <person name="Noback M."/>
            <person name="Noone D."/>
            <person name="O'Reilly M."/>
            <person name="Ogawa K."/>
            <person name="Ogiwara A."/>
            <person name="Oudega B."/>
            <person name="Park S.-H."/>
            <person name="Parro V."/>
            <person name="Pohl T.M."/>
            <person name="Portetelle D."/>
            <person name="Porwollik S."/>
            <person name="Prescott A.M."/>
            <person name="Presecan E."/>
            <person name="Pujic P."/>
            <person name="Purnelle B."/>
            <person name="Rapoport G."/>
            <person name="Rey M."/>
            <person name="Reynolds S."/>
            <person name="Rieger M."/>
            <person name="Rivolta C."/>
            <person name="Rocha E."/>
            <person name="Roche B."/>
            <person name="Rose M."/>
            <person name="Sadaie Y."/>
            <person name="Sato T."/>
            <person name="Scanlan E."/>
            <person name="Schleich S."/>
            <person name="Schroeter R."/>
            <person name="Scoffone F."/>
            <person name="Sekiguchi J."/>
            <person name="Sekowska A."/>
            <person name="Seror S.J."/>
            <person name="Serror P."/>
            <person name="Shin B.-S."/>
            <person name="Soldo B."/>
            <person name="Sorokin A."/>
            <person name="Tacconi E."/>
            <person name="Takagi T."/>
            <person name="Takahashi H."/>
            <person name="Takemaru K."/>
            <person name="Takeuchi M."/>
            <person name="Tamakoshi A."/>
            <person name="Tanaka T."/>
            <person name="Terpstra P."/>
            <person name="Tognoni A."/>
            <person name="Tosato V."/>
            <person name="Uchiyama S."/>
            <person name="Vandenbol M."/>
            <person name="Vannier F."/>
            <person name="Vassarotti A."/>
            <person name="Viari A."/>
            <person name="Wambutt R."/>
            <person name="Wedler E."/>
            <person name="Wedler H."/>
            <person name="Weitzenegger T."/>
            <person name="Winters P."/>
            <person name="Wipat A."/>
            <person name="Yamamoto H."/>
            <person name="Yamane K."/>
            <person name="Yasumoto K."/>
            <person name="Yata K."/>
            <person name="Yoshida K."/>
            <person name="Yoshikawa H.-F."/>
            <person name="Zumstein E."/>
            <person name="Yoshikawa H."/>
            <person name="Danchin A."/>
        </authorList>
    </citation>
    <scope>NUCLEOTIDE SEQUENCE [LARGE SCALE GENOMIC DNA]</scope>
    <source>
        <strain>168</strain>
    </source>
</reference>
<accession>P54341</accession>
<gene>
    <name type="primary">xkdV</name>
    <name type="ordered locus">BSU12750</name>
</gene>
<feature type="chain" id="PRO_0000066034" description="Phage-like element PBSX protein XkdV">
    <location>
        <begin position="1"/>
        <end position="687"/>
    </location>
</feature>
<comment type="similarity">
    <text evidence="1">To B.subtilis YqcC.</text>
</comment>
<proteinExistence type="predicted"/>
<protein>
    <recommendedName>
        <fullName>Phage-like element PBSX protein XkdV</fullName>
    </recommendedName>
</protein>
<dbReference type="EMBL" id="Z70177">
    <property type="protein sequence ID" value="CAA94043.1"/>
    <property type="molecule type" value="Genomic_DNA"/>
</dbReference>
<dbReference type="EMBL" id="AL009126">
    <property type="protein sequence ID" value="CAB13132.1"/>
    <property type="molecule type" value="Genomic_DNA"/>
</dbReference>
<dbReference type="PIR" id="E69733">
    <property type="entry name" value="E69733"/>
</dbReference>
<dbReference type="RefSeq" id="NP_389158.1">
    <property type="nucleotide sequence ID" value="NC_000964.3"/>
</dbReference>
<dbReference type="RefSeq" id="WP_003244681.1">
    <property type="nucleotide sequence ID" value="NZ_OZ025638.1"/>
</dbReference>
<dbReference type="FunCoup" id="P54341">
    <property type="interactions" value="50"/>
</dbReference>
<dbReference type="STRING" id="224308.BSU12750"/>
<dbReference type="PaxDb" id="224308-BSU12750"/>
<dbReference type="EnsemblBacteria" id="CAB13132">
    <property type="protein sequence ID" value="CAB13132"/>
    <property type="gene ID" value="BSU_12750"/>
</dbReference>
<dbReference type="GeneID" id="939421"/>
<dbReference type="KEGG" id="bsu:BSU12750"/>
<dbReference type="PATRIC" id="fig|224308.179.peg.1383"/>
<dbReference type="eggNOG" id="ENOG502ZQEV">
    <property type="taxonomic scope" value="Bacteria"/>
</dbReference>
<dbReference type="InParanoid" id="P54341"/>
<dbReference type="OrthoDB" id="2667186at2"/>
<dbReference type="BioCyc" id="BSUB:BSU12750-MONOMER"/>
<dbReference type="Proteomes" id="UP000001570">
    <property type="component" value="Chromosome"/>
</dbReference>
<dbReference type="Gene3D" id="2.60.120.40">
    <property type="match status" value="1"/>
</dbReference>
<dbReference type="InterPro" id="IPR008983">
    <property type="entry name" value="Tumour_necrosis_fac-like_dom"/>
</dbReference>
<dbReference type="SUPFAM" id="SSF49842">
    <property type="entry name" value="TNF-like"/>
    <property type="match status" value="1"/>
</dbReference>